<accession>A0L4Y9</accession>
<evidence type="ECO:0000255" key="1">
    <source>
        <dbReference type="HAMAP-Rule" id="MF_00402"/>
    </source>
</evidence>
<evidence type="ECO:0000305" key="2"/>
<organism>
    <name type="scientific">Magnetococcus marinus (strain ATCC BAA-1437 / JCM 17883 / MC-1)</name>
    <dbReference type="NCBI Taxonomy" id="156889"/>
    <lineage>
        <taxon>Bacteria</taxon>
        <taxon>Pseudomonadati</taxon>
        <taxon>Pseudomonadota</taxon>
        <taxon>Alphaproteobacteria</taxon>
        <taxon>Magnetococcales</taxon>
        <taxon>Magnetococcaceae</taxon>
        <taxon>Magnetococcus</taxon>
    </lineage>
</organism>
<comment type="function">
    <text evidence="1">This protein is located at the 30S-50S ribosomal subunit interface and may play a role in the structure and function of the aminoacyl-tRNA binding site.</text>
</comment>
<comment type="similarity">
    <text evidence="1">Belongs to the bacterial ribosomal protein bL19 family.</text>
</comment>
<proteinExistence type="inferred from homology"/>
<name>RL19_MAGMM</name>
<dbReference type="EMBL" id="CP000471">
    <property type="protein sequence ID" value="ABK43032.1"/>
    <property type="molecule type" value="Genomic_DNA"/>
</dbReference>
<dbReference type="RefSeq" id="WP_011712199.1">
    <property type="nucleotide sequence ID" value="NC_008576.1"/>
</dbReference>
<dbReference type="SMR" id="A0L4Y9"/>
<dbReference type="STRING" id="156889.Mmc1_0507"/>
<dbReference type="KEGG" id="mgm:Mmc1_0507"/>
<dbReference type="eggNOG" id="COG0335">
    <property type="taxonomic scope" value="Bacteria"/>
</dbReference>
<dbReference type="HOGENOM" id="CLU_103507_2_1_5"/>
<dbReference type="OrthoDB" id="9803541at2"/>
<dbReference type="Proteomes" id="UP000002586">
    <property type="component" value="Chromosome"/>
</dbReference>
<dbReference type="GO" id="GO:0022625">
    <property type="term" value="C:cytosolic large ribosomal subunit"/>
    <property type="evidence" value="ECO:0007669"/>
    <property type="project" value="TreeGrafter"/>
</dbReference>
<dbReference type="GO" id="GO:0003735">
    <property type="term" value="F:structural constituent of ribosome"/>
    <property type="evidence" value="ECO:0007669"/>
    <property type="project" value="InterPro"/>
</dbReference>
<dbReference type="GO" id="GO:0006412">
    <property type="term" value="P:translation"/>
    <property type="evidence" value="ECO:0007669"/>
    <property type="project" value="UniProtKB-UniRule"/>
</dbReference>
<dbReference type="FunFam" id="2.30.30.790:FF:000001">
    <property type="entry name" value="50S ribosomal protein L19"/>
    <property type="match status" value="1"/>
</dbReference>
<dbReference type="Gene3D" id="2.30.30.790">
    <property type="match status" value="1"/>
</dbReference>
<dbReference type="HAMAP" id="MF_00402">
    <property type="entry name" value="Ribosomal_bL19"/>
    <property type="match status" value="1"/>
</dbReference>
<dbReference type="InterPro" id="IPR001857">
    <property type="entry name" value="Ribosomal_bL19"/>
</dbReference>
<dbReference type="InterPro" id="IPR018257">
    <property type="entry name" value="Ribosomal_bL19_CS"/>
</dbReference>
<dbReference type="InterPro" id="IPR038657">
    <property type="entry name" value="Ribosomal_bL19_sf"/>
</dbReference>
<dbReference type="InterPro" id="IPR008991">
    <property type="entry name" value="Translation_prot_SH3-like_sf"/>
</dbReference>
<dbReference type="NCBIfam" id="TIGR01024">
    <property type="entry name" value="rplS_bact"/>
    <property type="match status" value="1"/>
</dbReference>
<dbReference type="PANTHER" id="PTHR15680:SF9">
    <property type="entry name" value="LARGE RIBOSOMAL SUBUNIT PROTEIN BL19M"/>
    <property type="match status" value="1"/>
</dbReference>
<dbReference type="PANTHER" id="PTHR15680">
    <property type="entry name" value="RIBOSOMAL PROTEIN L19"/>
    <property type="match status" value="1"/>
</dbReference>
<dbReference type="Pfam" id="PF01245">
    <property type="entry name" value="Ribosomal_L19"/>
    <property type="match status" value="1"/>
</dbReference>
<dbReference type="PIRSF" id="PIRSF002191">
    <property type="entry name" value="Ribosomal_L19"/>
    <property type="match status" value="1"/>
</dbReference>
<dbReference type="PRINTS" id="PR00061">
    <property type="entry name" value="RIBOSOMALL19"/>
</dbReference>
<dbReference type="SUPFAM" id="SSF50104">
    <property type="entry name" value="Translation proteins SH3-like domain"/>
    <property type="match status" value="1"/>
</dbReference>
<dbReference type="PROSITE" id="PS01015">
    <property type="entry name" value="RIBOSOMAL_L19"/>
    <property type="match status" value="1"/>
</dbReference>
<reference key="1">
    <citation type="journal article" date="2009" name="Appl. Environ. Microbiol.">
        <title>Complete genome sequence of the chemolithoautotrophic marine magnetotactic coccus strain MC-1.</title>
        <authorList>
            <person name="Schubbe S."/>
            <person name="Williams T.J."/>
            <person name="Xie G."/>
            <person name="Kiss H.E."/>
            <person name="Brettin T.S."/>
            <person name="Martinez D."/>
            <person name="Ross C.A."/>
            <person name="Schuler D."/>
            <person name="Cox B.L."/>
            <person name="Nealson K.H."/>
            <person name="Bazylinski D.A."/>
        </authorList>
    </citation>
    <scope>NUCLEOTIDE SEQUENCE [LARGE SCALE GENOMIC DNA]</scope>
    <source>
        <strain>ATCC BAA-1437 / JCM 17883 / MC-1</strain>
    </source>
</reference>
<feature type="chain" id="PRO_0000340741" description="Large ribosomal subunit protein bL19">
    <location>
        <begin position="1"/>
        <end position="116"/>
    </location>
</feature>
<protein>
    <recommendedName>
        <fullName evidence="1">Large ribosomal subunit protein bL19</fullName>
    </recommendedName>
    <alternativeName>
        <fullName evidence="2">50S ribosomal protein L19</fullName>
    </alternativeName>
</protein>
<gene>
    <name evidence="1" type="primary">rplS</name>
    <name type="ordered locus">Mmc1_0507</name>
</gene>
<sequence>MNQVQAFEQSMIPETAVPKFGAGDTLKVHVKVVEGTRERIQVFEGVCIGRMNAGLRSTFTVRKISFGEGVERTFPVYSPRVDKIEVIRHGDVRRAKLYYLRGRTGKASRIKEKRDW</sequence>
<keyword id="KW-1185">Reference proteome</keyword>
<keyword id="KW-0687">Ribonucleoprotein</keyword>
<keyword id="KW-0689">Ribosomal protein</keyword>